<protein>
    <recommendedName>
        <fullName evidence="1">23S rRNA (uracil(747)-C(5))-methyltransferase RlmC</fullName>
        <ecNumber evidence="1">2.1.1.189</ecNumber>
    </recommendedName>
    <alternativeName>
        <fullName evidence="1">23S rRNA(m5U747)-methyltransferase</fullName>
    </alternativeName>
</protein>
<sequence>MQCALYDAGRCRSCQWIMQPIPEQLSAKTADLKNLLADFPVEEWCAPVSGPEQGFRNKAKMVVSGSVEKPLLGMLHRDGTPEDLCDCPLYPASFAPVFAALKPFIARAGLTPYNVARKRGELKYILLTESQSDGGMMLRFVLRSDTKLAQLRKALPWLHEQLPQLKVITVNIQPVHMAIMEGETEIYLTEQQALAERFNDVPLWIRPQSFFQTNPAVASQLYATARDWVRQLPVKHMWDLFCGVGGFGLHCATPDMQLTGIEIASEAIACAKQSAAELGLTRLQFQALDSTQFATAQGDVPELVLVNPPRRGIGKPLCDYLSTMAPRFIIYSSCNAQTMAKDIRELPGFRIERVQLFDMFPHTAHYEVLTLLVKQ</sequence>
<reference key="1">
    <citation type="journal article" date="2009" name="J. Bacteriol.">
        <title>Genomic sequencing reveals regulatory mutations and recombinational events in the widely used MC4100 lineage of Escherichia coli K-12.</title>
        <authorList>
            <person name="Ferenci T."/>
            <person name="Zhou Z."/>
            <person name="Betteridge T."/>
            <person name="Ren Y."/>
            <person name="Liu Y."/>
            <person name="Feng L."/>
            <person name="Reeves P.R."/>
            <person name="Wang L."/>
        </authorList>
    </citation>
    <scope>NUCLEOTIDE SEQUENCE [LARGE SCALE GENOMIC DNA]</scope>
    <source>
        <strain>K12 / MC4100 / BW2952</strain>
    </source>
</reference>
<name>RLMC_ECOBW</name>
<feature type="chain" id="PRO_1000213201" description="23S rRNA (uracil(747)-C(5))-methyltransferase RlmC">
    <location>
        <begin position="1"/>
        <end position="375"/>
    </location>
</feature>
<feature type="active site" description="Nucleophile" evidence="1">
    <location>
        <position position="334"/>
    </location>
</feature>
<feature type="binding site" evidence="1">
    <location>
        <position position="3"/>
    </location>
    <ligand>
        <name>[4Fe-4S] cluster</name>
        <dbReference type="ChEBI" id="CHEBI:49883"/>
    </ligand>
</feature>
<feature type="binding site" evidence="1">
    <location>
        <position position="11"/>
    </location>
    <ligand>
        <name>[4Fe-4S] cluster</name>
        <dbReference type="ChEBI" id="CHEBI:49883"/>
    </ligand>
</feature>
<feature type="binding site" evidence="1">
    <location>
        <position position="14"/>
    </location>
    <ligand>
        <name>[4Fe-4S] cluster</name>
        <dbReference type="ChEBI" id="CHEBI:49883"/>
    </ligand>
</feature>
<feature type="binding site" evidence="1">
    <location>
        <position position="87"/>
    </location>
    <ligand>
        <name>[4Fe-4S] cluster</name>
        <dbReference type="ChEBI" id="CHEBI:49883"/>
    </ligand>
</feature>
<feature type="binding site" evidence="1">
    <location>
        <position position="212"/>
    </location>
    <ligand>
        <name>S-adenosyl-L-methionine</name>
        <dbReference type="ChEBI" id="CHEBI:59789"/>
    </ligand>
</feature>
<feature type="binding site" evidence="1">
    <location>
        <position position="241"/>
    </location>
    <ligand>
        <name>S-adenosyl-L-methionine</name>
        <dbReference type="ChEBI" id="CHEBI:59789"/>
    </ligand>
</feature>
<feature type="binding site" evidence="1">
    <location>
        <position position="262"/>
    </location>
    <ligand>
        <name>S-adenosyl-L-methionine</name>
        <dbReference type="ChEBI" id="CHEBI:59789"/>
    </ligand>
</feature>
<feature type="binding site" evidence="1">
    <location>
        <position position="307"/>
    </location>
    <ligand>
        <name>S-adenosyl-L-methionine</name>
        <dbReference type="ChEBI" id="CHEBI:59789"/>
    </ligand>
</feature>
<keyword id="KW-0004">4Fe-4S</keyword>
<keyword id="KW-0408">Iron</keyword>
<keyword id="KW-0411">Iron-sulfur</keyword>
<keyword id="KW-0479">Metal-binding</keyword>
<keyword id="KW-0489">Methyltransferase</keyword>
<keyword id="KW-0698">rRNA processing</keyword>
<keyword id="KW-0949">S-adenosyl-L-methionine</keyword>
<keyword id="KW-0808">Transferase</keyword>
<evidence type="ECO:0000255" key="1">
    <source>
        <dbReference type="HAMAP-Rule" id="MF_01012"/>
    </source>
</evidence>
<organism>
    <name type="scientific">Escherichia coli (strain K12 / MC4100 / BW2952)</name>
    <dbReference type="NCBI Taxonomy" id="595496"/>
    <lineage>
        <taxon>Bacteria</taxon>
        <taxon>Pseudomonadati</taxon>
        <taxon>Pseudomonadota</taxon>
        <taxon>Gammaproteobacteria</taxon>
        <taxon>Enterobacterales</taxon>
        <taxon>Enterobacteriaceae</taxon>
        <taxon>Escherichia</taxon>
    </lineage>
</organism>
<proteinExistence type="inferred from homology"/>
<comment type="function">
    <text evidence="1">Catalyzes the formation of 5-methyl-uridine at position 747 (m5U747) in 23S rRNA.</text>
</comment>
<comment type="catalytic activity">
    <reaction evidence="1">
        <text>uridine(747) in 23S rRNA + S-adenosyl-L-methionine = 5-methyluridine(747) in 23S rRNA + S-adenosyl-L-homocysteine + H(+)</text>
        <dbReference type="Rhea" id="RHEA:42628"/>
        <dbReference type="Rhea" id="RHEA-COMP:10154"/>
        <dbReference type="Rhea" id="RHEA-COMP:10155"/>
        <dbReference type="ChEBI" id="CHEBI:15378"/>
        <dbReference type="ChEBI" id="CHEBI:57856"/>
        <dbReference type="ChEBI" id="CHEBI:59789"/>
        <dbReference type="ChEBI" id="CHEBI:65315"/>
        <dbReference type="ChEBI" id="CHEBI:74447"/>
        <dbReference type="EC" id="2.1.1.189"/>
    </reaction>
</comment>
<comment type="similarity">
    <text evidence="1">Belongs to the class I-like SAM-binding methyltransferase superfamily. RNA M5U methyltransferase family. RlmC subfamily.</text>
</comment>
<dbReference type="EC" id="2.1.1.189" evidence="1"/>
<dbReference type="EMBL" id="CP001396">
    <property type="protein sequence ID" value="ACR61752.1"/>
    <property type="molecule type" value="Genomic_DNA"/>
</dbReference>
<dbReference type="RefSeq" id="WP_001149682.1">
    <property type="nucleotide sequence ID" value="NC_012759.1"/>
</dbReference>
<dbReference type="SMR" id="C4ZY31"/>
<dbReference type="KEGG" id="ebw:BWG_0712"/>
<dbReference type="HOGENOM" id="CLU_014689_0_0_6"/>
<dbReference type="GO" id="GO:0051539">
    <property type="term" value="F:4 iron, 4 sulfur cluster binding"/>
    <property type="evidence" value="ECO:0007669"/>
    <property type="project" value="UniProtKB-KW"/>
</dbReference>
<dbReference type="GO" id="GO:0005506">
    <property type="term" value="F:iron ion binding"/>
    <property type="evidence" value="ECO:0007669"/>
    <property type="project" value="UniProtKB-UniRule"/>
</dbReference>
<dbReference type="GO" id="GO:0070041">
    <property type="term" value="F:rRNA (uridine-C5-)-methyltransferase activity"/>
    <property type="evidence" value="ECO:0007669"/>
    <property type="project" value="UniProtKB-UniRule"/>
</dbReference>
<dbReference type="GO" id="GO:0070475">
    <property type="term" value="P:rRNA base methylation"/>
    <property type="evidence" value="ECO:0007669"/>
    <property type="project" value="TreeGrafter"/>
</dbReference>
<dbReference type="CDD" id="cd02440">
    <property type="entry name" value="AdoMet_MTases"/>
    <property type="match status" value="1"/>
</dbReference>
<dbReference type="FunFam" id="2.40.50.1070:FF:000002">
    <property type="entry name" value="23S rRNA (uracil(747)-C(5))-methyltransferase RlmC"/>
    <property type="match status" value="1"/>
</dbReference>
<dbReference type="FunFam" id="3.40.50.150:FF:000049">
    <property type="entry name" value="23S rRNA (uracil(747)-C(5))-methyltransferase RlmC"/>
    <property type="match status" value="1"/>
</dbReference>
<dbReference type="Gene3D" id="2.40.50.1070">
    <property type="match status" value="1"/>
</dbReference>
<dbReference type="Gene3D" id="3.40.50.150">
    <property type="entry name" value="Vaccinia Virus protein VP39"/>
    <property type="match status" value="1"/>
</dbReference>
<dbReference type="HAMAP" id="MF_01012">
    <property type="entry name" value="23SrRNA_methyltr_RlmC"/>
    <property type="match status" value="1"/>
</dbReference>
<dbReference type="InterPro" id="IPR011825">
    <property type="entry name" value="23SrRNA_MeTrfase_RlmC"/>
</dbReference>
<dbReference type="InterPro" id="IPR030390">
    <property type="entry name" value="MeTrfase_TrmA_AS"/>
</dbReference>
<dbReference type="InterPro" id="IPR030391">
    <property type="entry name" value="MeTrfase_TrmA_CS"/>
</dbReference>
<dbReference type="InterPro" id="IPR029063">
    <property type="entry name" value="SAM-dependent_MTases_sf"/>
</dbReference>
<dbReference type="InterPro" id="IPR010280">
    <property type="entry name" value="U5_MeTrfase_fam"/>
</dbReference>
<dbReference type="NCBIfam" id="TIGR02085">
    <property type="entry name" value="meth_trns_rumB"/>
    <property type="match status" value="1"/>
</dbReference>
<dbReference type="PANTHER" id="PTHR11061">
    <property type="entry name" value="RNA M5U METHYLTRANSFERASE"/>
    <property type="match status" value="1"/>
</dbReference>
<dbReference type="PANTHER" id="PTHR11061:SF30">
    <property type="entry name" value="TRNA (URACIL(54)-C(5))-METHYLTRANSFERASE"/>
    <property type="match status" value="1"/>
</dbReference>
<dbReference type="Pfam" id="PF05958">
    <property type="entry name" value="tRNA_U5-meth_tr"/>
    <property type="match status" value="1"/>
</dbReference>
<dbReference type="SUPFAM" id="SSF53335">
    <property type="entry name" value="S-adenosyl-L-methionine-dependent methyltransferases"/>
    <property type="match status" value="1"/>
</dbReference>
<dbReference type="PROSITE" id="PS51687">
    <property type="entry name" value="SAM_MT_RNA_M5U"/>
    <property type="match status" value="1"/>
</dbReference>
<dbReference type="PROSITE" id="PS01230">
    <property type="entry name" value="TRMA_1"/>
    <property type="match status" value="1"/>
</dbReference>
<dbReference type="PROSITE" id="PS01231">
    <property type="entry name" value="TRMA_2"/>
    <property type="match status" value="1"/>
</dbReference>
<accession>C4ZY31</accession>
<gene>
    <name evidence="1" type="primary">rlmC</name>
    <name type="synonym">rumB</name>
    <name type="ordered locus">BWG_0712</name>
</gene>